<protein>
    <recommendedName>
        <fullName evidence="2">SAGA-associated factor 11 homolog</fullName>
    </recommendedName>
</protein>
<organism>
    <name type="scientific">Drosophila sechellia</name>
    <name type="common">Fruit fly</name>
    <dbReference type="NCBI Taxonomy" id="7238"/>
    <lineage>
        <taxon>Eukaryota</taxon>
        <taxon>Metazoa</taxon>
        <taxon>Ecdysozoa</taxon>
        <taxon>Arthropoda</taxon>
        <taxon>Hexapoda</taxon>
        <taxon>Insecta</taxon>
        <taxon>Pterygota</taxon>
        <taxon>Neoptera</taxon>
        <taxon>Endopterygota</taxon>
        <taxon>Diptera</taxon>
        <taxon>Brachycera</taxon>
        <taxon>Muscomorpha</taxon>
        <taxon>Ephydroidea</taxon>
        <taxon>Drosophilidae</taxon>
        <taxon>Drosophila</taxon>
        <taxon>Sophophora</taxon>
    </lineage>
</organism>
<sequence length="195" mass="21228">MSAANMPTTTGAQGSGNQVPRTSTTIVNHRELIKEPKNLDEAANYLFQTLLDDAVVGIFNETHHLRKSGNLAALDGVPEDSTYRMCEMPNLDIFGISTAKKPMDCTCPNCDRLVAAARFAPHLEKCMGMGRISSRIASRRLATKEGATSAHLHSSGNTGGTDDEDDVDWSSDKRRKKSNQNSRNNGSKKNNGKTF</sequence>
<comment type="function">
    <text evidence="2">Component of the transcription regulatory histone acetylation (HAT) complex SAGA, a multiprotein complex that activates transcription by remodeling chromatin and mediating histone acetylation and deubiquitination. Within the SAGA complex, participates in a subcomplex that specifically deubiquitinates histone H2B. The SAGA complex is recruited to specific gene promoters by activators, where it is required for transcription. Required for nuclear receptor-mediated transactivation. Binds independently on SAGA to promoters in an RNA-dependent manner. Binds to mRNA and is essential for total mRNA export from the nucleus. Required to counteract heterochromatin silencing. Controls the development of neuronal connectivity in visual system by being required for accurate axon targeting in the optic lobe. Required for expression of ecdysone-induced genes such as br/broad.</text>
</comment>
<comment type="subunit">
    <text evidence="2">Component of some SAGA transcription coactivator-HAT complexes, at least composed of Ada2b, not/nonstop, Pcaf/Gcn5, Sgf11 and Spt3. Within the SAGA complex, Sgf11, e(y)2, and not/nonstop form an additional subcomplex of SAGA called the DUB module (deubiquitination module). Interacts directly with not/nonstop. Interacts with the AMEX complex component xmas-2. Interacts with Cbp80; important for promoter recruitment of Sgf11 that is not associated with the DUB module.</text>
</comment>
<comment type="subcellular location">
    <subcellularLocation>
        <location evidence="2">Nucleus</location>
        <location evidence="2">Nucleoplasm</location>
    </subcellularLocation>
    <subcellularLocation>
        <location evidence="2">Cytoplasm</location>
    </subcellularLocation>
    <text evidence="2">Localizes to nuclear periphery, in contact with the nuclear pore complex (NPC).</text>
</comment>
<comment type="domain">
    <text evidence="2">The long N-terminal helix forms part of the 'assembly lobe' of the SAGA deubiquitination module.</text>
</comment>
<comment type="domain">
    <text evidence="2">The C-terminal SGF11-type zinc-finger domain together with the C-terminal catalytic domain of not/nonstop forms the 'catalytic lobe' of the SAGA deubiquitination module.</text>
</comment>
<comment type="similarity">
    <text evidence="2">Belongs to the SGF11 family.</text>
</comment>
<comment type="sequence caution" evidence="4">
    <conflict type="erroneous gene model prediction">
        <sequence resource="EMBL-CDS" id="EDW46532"/>
    </conflict>
</comment>
<name>SGF11_DROSE</name>
<proteinExistence type="inferred from homology"/>
<keyword id="KW-0010">Activator</keyword>
<keyword id="KW-0156">Chromatin regulator</keyword>
<keyword id="KW-0963">Cytoplasm</keyword>
<keyword id="KW-0479">Metal-binding</keyword>
<keyword id="KW-0509">mRNA transport</keyword>
<keyword id="KW-0539">Nucleus</keyword>
<keyword id="KW-0597">Phosphoprotein</keyword>
<keyword id="KW-0653">Protein transport</keyword>
<keyword id="KW-1185">Reference proteome</keyword>
<keyword id="KW-0804">Transcription</keyword>
<keyword id="KW-0805">Transcription regulation</keyword>
<keyword id="KW-0811">Translocation</keyword>
<keyword id="KW-0813">Transport</keyword>
<keyword id="KW-0862">Zinc</keyword>
<keyword id="KW-0863">Zinc-finger</keyword>
<reference key="1">
    <citation type="journal article" date="2007" name="Nature">
        <title>Evolution of genes and genomes on the Drosophila phylogeny.</title>
        <authorList>
            <consortium name="Drosophila 12 genomes consortium"/>
        </authorList>
    </citation>
    <scope>NUCLEOTIDE SEQUENCE [LARGE SCALE GENOMIC DNA]</scope>
    <source>
        <strain>Rob3c / Tucson 14021-0248.25</strain>
    </source>
</reference>
<evidence type="ECO:0000250" key="1"/>
<evidence type="ECO:0000255" key="2">
    <source>
        <dbReference type="HAMAP-Rule" id="MF_03047"/>
    </source>
</evidence>
<evidence type="ECO:0000256" key="3">
    <source>
        <dbReference type="SAM" id="MobiDB-lite"/>
    </source>
</evidence>
<evidence type="ECO:0000305" key="4"/>
<dbReference type="EMBL" id="CH480834">
    <property type="protein sequence ID" value="EDW46532.1"/>
    <property type="status" value="ALT_SEQ"/>
    <property type="molecule type" value="Genomic_DNA"/>
</dbReference>
<dbReference type="RefSeq" id="XP_002042605.1">
    <property type="nucleotide sequence ID" value="XM_002042569.1"/>
</dbReference>
<dbReference type="SMR" id="B4IFU5"/>
<dbReference type="STRING" id="7238.B4IFU5"/>
<dbReference type="Proteomes" id="UP000001292">
    <property type="component" value="Unassembled WGS sequence"/>
</dbReference>
<dbReference type="GO" id="GO:0005737">
    <property type="term" value="C:cytoplasm"/>
    <property type="evidence" value="ECO:0007669"/>
    <property type="project" value="UniProtKB-SubCell"/>
</dbReference>
<dbReference type="GO" id="GO:0071819">
    <property type="term" value="C:DUBm complex"/>
    <property type="evidence" value="ECO:0007669"/>
    <property type="project" value="UniProtKB-UniRule"/>
</dbReference>
<dbReference type="GO" id="GO:0005643">
    <property type="term" value="C:nuclear pore"/>
    <property type="evidence" value="ECO:0007669"/>
    <property type="project" value="UniProtKB-UniRule"/>
</dbReference>
<dbReference type="GO" id="GO:0005654">
    <property type="term" value="C:nucleoplasm"/>
    <property type="evidence" value="ECO:0007669"/>
    <property type="project" value="UniProtKB-SubCell"/>
</dbReference>
<dbReference type="GO" id="GO:0000124">
    <property type="term" value="C:SAGA complex"/>
    <property type="evidence" value="ECO:0000250"/>
    <property type="project" value="UniProtKB"/>
</dbReference>
<dbReference type="GO" id="GO:0003713">
    <property type="term" value="F:transcription coactivator activity"/>
    <property type="evidence" value="ECO:0007669"/>
    <property type="project" value="UniProtKB-UniRule"/>
</dbReference>
<dbReference type="GO" id="GO:0008270">
    <property type="term" value="F:zinc ion binding"/>
    <property type="evidence" value="ECO:0007669"/>
    <property type="project" value="UniProtKB-UniRule"/>
</dbReference>
<dbReference type="GO" id="GO:0006325">
    <property type="term" value="P:chromatin organization"/>
    <property type="evidence" value="ECO:0000250"/>
    <property type="project" value="UniProtKB"/>
</dbReference>
<dbReference type="GO" id="GO:0006406">
    <property type="term" value="P:mRNA export from nucleus"/>
    <property type="evidence" value="ECO:0007669"/>
    <property type="project" value="UniProtKB-UniRule"/>
</dbReference>
<dbReference type="GO" id="GO:0045893">
    <property type="term" value="P:positive regulation of DNA-templated transcription"/>
    <property type="evidence" value="ECO:0000250"/>
    <property type="project" value="UniProtKB"/>
</dbReference>
<dbReference type="GO" id="GO:0015031">
    <property type="term" value="P:protein transport"/>
    <property type="evidence" value="ECO:0007669"/>
    <property type="project" value="UniProtKB-KW"/>
</dbReference>
<dbReference type="GO" id="GO:0006357">
    <property type="term" value="P:regulation of transcription by RNA polymerase II"/>
    <property type="evidence" value="ECO:0007669"/>
    <property type="project" value="TreeGrafter"/>
</dbReference>
<dbReference type="FunFam" id="3.30.160.60:FF:000118">
    <property type="entry name" value="Ataxin-7-like protein 3"/>
    <property type="match status" value="1"/>
</dbReference>
<dbReference type="Gene3D" id="3.30.160.60">
    <property type="entry name" value="Classic Zinc Finger"/>
    <property type="match status" value="1"/>
</dbReference>
<dbReference type="HAMAP" id="MF_03047">
    <property type="entry name" value="Sgf11"/>
    <property type="match status" value="1"/>
</dbReference>
<dbReference type="InterPro" id="IPR013246">
    <property type="entry name" value="SAGA_su_Sgf11"/>
</dbReference>
<dbReference type="InterPro" id="IPR051078">
    <property type="entry name" value="SGF11"/>
</dbReference>
<dbReference type="PANTHER" id="PTHR46367">
    <property type="entry name" value="ATAXIN-7-LIKE PROTEIN 3"/>
    <property type="match status" value="1"/>
</dbReference>
<dbReference type="PANTHER" id="PTHR46367:SF1">
    <property type="entry name" value="ATAXIN-7-LIKE PROTEIN 3"/>
    <property type="match status" value="1"/>
</dbReference>
<dbReference type="Pfam" id="PF08209">
    <property type="entry name" value="Sgf11"/>
    <property type="match status" value="1"/>
</dbReference>
<feature type="chain" id="PRO_0000367529" description="SAGA-associated factor 11 homolog">
    <location>
        <begin position="1"/>
        <end position="195"/>
    </location>
</feature>
<feature type="zinc finger region" description="SGF11-type" evidence="2">
    <location>
        <begin position="105"/>
        <end position="126"/>
    </location>
</feature>
<feature type="region of interest" description="Disordered" evidence="3">
    <location>
        <begin position="1"/>
        <end position="22"/>
    </location>
</feature>
<feature type="region of interest" description="Disordered" evidence="3">
    <location>
        <begin position="140"/>
        <end position="195"/>
    </location>
</feature>
<feature type="compositionally biased region" description="Low complexity" evidence="3">
    <location>
        <begin position="179"/>
        <end position="195"/>
    </location>
</feature>
<feature type="modified residue" description="Phosphoserine" evidence="1">
    <location>
        <position position="171"/>
    </location>
</feature>
<gene>
    <name evidence="2" type="primary">Sgf11</name>
    <name type="ORF">GM14927</name>
</gene>
<accession>B4IFU5</accession>